<comment type="catalytic activity">
    <reaction evidence="1">
        <text>(6S)-5,6,7,8-tetrahydrofolate + formate + ATP = (6R)-10-formyltetrahydrofolate + ADP + phosphate</text>
        <dbReference type="Rhea" id="RHEA:20221"/>
        <dbReference type="ChEBI" id="CHEBI:15740"/>
        <dbReference type="ChEBI" id="CHEBI:30616"/>
        <dbReference type="ChEBI" id="CHEBI:43474"/>
        <dbReference type="ChEBI" id="CHEBI:57453"/>
        <dbReference type="ChEBI" id="CHEBI:195366"/>
        <dbReference type="ChEBI" id="CHEBI:456216"/>
        <dbReference type="EC" id="6.3.4.3"/>
    </reaction>
</comment>
<comment type="pathway">
    <text evidence="1">One-carbon metabolism; tetrahydrofolate interconversion.</text>
</comment>
<comment type="similarity">
    <text evidence="1">Belongs to the formate--tetrahydrofolate ligase family.</text>
</comment>
<accession>A6UBV0</accession>
<proteinExistence type="inferred from homology"/>
<reference key="1">
    <citation type="submission" date="2007-06" db="EMBL/GenBank/DDBJ databases">
        <title>Complete sequence of Sinorhizobium medicae WSM419 chromosome.</title>
        <authorList>
            <consortium name="US DOE Joint Genome Institute"/>
            <person name="Copeland A."/>
            <person name="Lucas S."/>
            <person name="Lapidus A."/>
            <person name="Barry K."/>
            <person name="Glavina del Rio T."/>
            <person name="Dalin E."/>
            <person name="Tice H."/>
            <person name="Pitluck S."/>
            <person name="Chain P."/>
            <person name="Malfatti S."/>
            <person name="Shin M."/>
            <person name="Vergez L."/>
            <person name="Schmutz J."/>
            <person name="Larimer F."/>
            <person name="Land M."/>
            <person name="Hauser L."/>
            <person name="Kyrpides N."/>
            <person name="Mikhailova N."/>
            <person name="Reeve W.G."/>
            <person name="Richardson P."/>
        </authorList>
    </citation>
    <scope>NUCLEOTIDE SEQUENCE [LARGE SCALE GENOMIC DNA]</scope>
    <source>
        <strain>WSM419</strain>
    </source>
</reference>
<dbReference type="EC" id="6.3.4.3" evidence="1"/>
<dbReference type="EMBL" id="CP000738">
    <property type="protein sequence ID" value="ABR61130.1"/>
    <property type="molecule type" value="Genomic_DNA"/>
</dbReference>
<dbReference type="SMR" id="A6UBV0"/>
<dbReference type="STRING" id="366394.Smed_2298"/>
<dbReference type="KEGG" id="smd:Smed_2298"/>
<dbReference type="eggNOG" id="COG2759">
    <property type="taxonomic scope" value="Bacteria"/>
</dbReference>
<dbReference type="HOGENOM" id="CLU_003601_3_3_5"/>
<dbReference type="UniPathway" id="UPA00193"/>
<dbReference type="Proteomes" id="UP000001108">
    <property type="component" value="Chromosome"/>
</dbReference>
<dbReference type="GO" id="GO:0005524">
    <property type="term" value="F:ATP binding"/>
    <property type="evidence" value="ECO:0007669"/>
    <property type="project" value="UniProtKB-UniRule"/>
</dbReference>
<dbReference type="GO" id="GO:0004329">
    <property type="term" value="F:formate-tetrahydrofolate ligase activity"/>
    <property type="evidence" value="ECO:0007669"/>
    <property type="project" value="UniProtKB-UniRule"/>
</dbReference>
<dbReference type="GO" id="GO:0035999">
    <property type="term" value="P:tetrahydrofolate interconversion"/>
    <property type="evidence" value="ECO:0007669"/>
    <property type="project" value="UniProtKB-UniRule"/>
</dbReference>
<dbReference type="CDD" id="cd00477">
    <property type="entry name" value="FTHFS"/>
    <property type="match status" value="1"/>
</dbReference>
<dbReference type="FunFam" id="3.30.1510.10:FF:000001">
    <property type="entry name" value="Formate--tetrahydrofolate ligase"/>
    <property type="match status" value="1"/>
</dbReference>
<dbReference type="FunFam" id="3.10.410.10:FF:000001">
    <property type="entry name" value="Putative formate--tetrahydrofolate ligase"/>
    <property type="match status" value="1"/>
</dbReference>
<dbReference type="Gene3D" id="3.30.1510.10">
    <property type="entry name" value="Domain 2, N(10)-formyltetrahydrofolate synthetase"/>
    <property type="match status" value="1"/>
</dbReference>
<dbReference type="Gene3D" id="3.10.410.10">
    <property type="entry name" value="Formyltetrahydrofolate synthetase, domain 3"/>
    <property type="match status" value="1"/>
</dbReference>
<dbReference type="Gene3D" id="3.40.50.300">
    <property type="entry name" value="P-loop containing nucleotide triphosphate hydrolases"/>
    <property type="match status" value="1"/>
</dbReference>
<dbReference type="HAMAP" id="MF_01543">
    <property type="entry name" value="FTHFS"/>
    <property type="match status" value="1"/>
</dbReference>
<dbReference type="InterPro" id="IPR000559">
    <property type="entry name" value="Formate_THF_ligase"/>
</dbReference>
<dbReference type="InterPro" id="IPR020628">
    <property type="entry name" value="Formate_THF_ligase_CS"/>
</dbReference>
<dbReference type="InterPro" id="IPR027417">
    <property type="entry name" value="P-loop_NTPase"/>
</dbReference>
<dbReference type="NCBIfam" id="NF010030">
    <property type="entry name" value="PRK13505.1"/>
    <property type="match status" value="1"/>
</dbReference>
<dbReference type="Pfam" id="PF01268">
    <property type="entry name" value="FTHFS"/>
    <property type="match status" value="1"/>
</dbReference>
<dbReference type="SUPFAM" id="SSF52540">
    <property type="entry name" value="P-loop containing nucleoside triphosphate hydrolases"/>
    <property type="match status" value="1"/>
</dbReference>
<dbReference type="PROSITE" id="PS00721">
    <property type="entry name" value="FTHFS_1"/>
    <property type="match status" value="1"/>
</dbReference>
<dbReference type="PROSITE" id="PS00722">
    <property type="entry name" value="FTHFS_2"/>
    <property type="match status" value="1"/>
</dbReference>
<keyword id="KW-0067">ATP-binding</keyword>
<keyword id="KW-0436">Ligase</keyword>
<keyword id="KW-0547">Nucleotide-binding</keyword>
<keyword id="KW-0554">One-carbon metabolism</keyword>
<name>FTHS_SINMW</name>
<evidence type="ECO:0000255" key="1">
    <source>
        <dbReference type="HAMAP-Rule" id="MF_01543"/>
    </source>
</evidence>
<feature type="chain" id="PRO_0000318569" description="Formate--tetrahydrofolate ligase">
    <location>
        <begin position="1"/>
        <end position="567"/>
    </location>
</feature>
<feature type="binding site" evidence="1">
    <location>
        <begin position="76"/>
        <end position="83"/>
    </location>
    <ligand>
        <name>ATP</name>
        <dbReference type="ChEBI" id="CHEBI:30616"/>
    </ligand>
</feature>
<organism>
    <name type="scientific">Sinorhizobium medicae (strain WSM419)</name>
    <name type="common">Ensifer medicae</name>
    <dbReference type="NCBI Taxonomy" id="366394"/>
    <lineage>
        <taxon>Bacteria</taxon>
        <taxon>Pseudomonadati</taxon>
        <taxon>Pseudomonadota</taxon>
        <taxon>Alphaproteobacteria</taxon>
        <taxon>Hyphomicrobiales</taxon>
        <taxon>Rhizobiaceae</taxon>
        <taxon>Sinorhizobium/Ensifer group</taxon>
        <taxon>Sinorhizobium</taxon>
    </lineage>
</organism>
<protein>
    <recommendedName>
        <fullName evidence="1">Formate--tetrahydrofolate ligase</fullName>
        <ecNumber evidence="1">6.3.4.3</ecNumber>
    </recommendedName>
    <alternativeName>
        <fullName evidence="1">Formyltetrahydrofolate synthetase</fullName>
        <shortName evidence="1">FHS</shortName>
        <shortName evidence="1">FTHFS</shortName>
    </alternativeName>
</protein>
<sequence length="567" mass="61461">MRKQLGEAVGEVKTDIEIARAARKQPIMEVGARLGIPPEHLLPYGHDKAKVSAEFIAAQREKKNGRLILVTAINPTPAGEGKTTTTVGLVDGLNRIGKKAIVCIREASLGPCFGIKGGAAGGGYAQVVPMEDINLHFTGDFHAITSAHNLLSALIDNHIYWGNEQAIDIRRIAWRRVMDMNDRALRHIVGSLGGVANGYPRETGFDITVASEVMAILCLAMDIRDLERRLGNIIIGYRRDKSPVYARDIKADGAMAVLLKDAMQPNLVQTLENNPAFVHGGPFANIAHGCNSVVATTTALKLADYVVTEAGFGADLGAEKFFDIKCRKAGLMPDAAVIVATVRAIKMNGGVKKEDLAKENVEALRKGCPNLGRHIQNVKKFGVPVLVAINHFTSDTEAEIQAIKDYVRTLGSEAVLCKHWAEGSAGIEELADKVADLADAGHSQFSPLYPDEMPLFQKIEAIAKDIYHASEVIADKLVRDQLRIWEDQGYGHLPICMAKTQYSFSTDPNLRGAPTGHTVPIREVRLAAGAGFIVVITGEIMTMPGLPKVPSSERIRLDEEGYIEGLF</sequence>
<gene>
    <name evidence="1" type="primary">fhs</name>
    <name type="ordered locus">Smed_2298</name>
</gene>